<accession>Q66209</accession>
<accession>O12417</accession>
<accession>O12713</accession>
<evidence type="ECO:0000255" key="1"/>
<evidence type="ECO:0000269" key="2">
    <source>
    </source>
</evidence>
<evidence type="ECO:0000305" key="3"/>
<gene>
    <name type="primary">odv-e56</name>
    <name type="ORF">18</name>
</gene>
<protein>
    <recommendedName>
        <fullName>Occlusion-derived virus envelope protein E56</fullName>
        <shortName>ODV-E56</shortName>
    </recommendedName>
    <alternativeName>
        <fullName>ODVP-6E</fullName>
    </alternativeName>
</protein>
<comment type="function">
    <text>Structural protein that is specific for occlusion-derived virus (ODV) envelopes but not of budded virus (BV).</text>
</comment>
<comment type="subcellular location">
    <subcellularLocation>
        <location evidence="3">Virion membrane</location>
        <topology evidence="3">Multi-pass membrane protein</topology>
    </subcellularLocation>
    <text evidence="2">Localized to the envelope region of preoccluded bundles of virions.</text>
</comment>
<comment type="miscellaneous">
    <text>Expressed late in infection (24 hours post-infection).</text>
</comment>
<comment type="similarity">
    <text evidence="3">Belongs to the baculoviridae E56 family.</text>
</comment>
<reference key="1">
    <citation type="journal article" date="1996" name="Virology">
        <title>Characterization of a highly conserved baculovirus structural protein that is specific for occlusion-derived virions.</title>
        <authorList>
            <person name="Theilmann D.A."/>
            <person name="Chantler J.K."/>
            <person name="Stewart S."/>
            <person name="Flipsen H.T.M."/>
            <person name="Vlak J.M."/>
            <person name="Crook N.E."/>
        </authorList>
    </citation>
    <scope>NUCLEOTIDE SEQUENCE [GENOMIC DNA]</scope>
    <source>
        <strain>Mexican 1</strain>
    </source>
</reference>
<reference key="2">
    <citation type="journal article" date="1997" name="Virus Genes">
        <title>Complete sequence and transposon mutagenesis of the BamHI J fragment of Cydia pomonella granulosis virus.</title>
        <authorList>
            <person name="Kang W."/>
            <person name="Crook N.E."/>
            <person name="Winstanley D."/>
            <person name="O'Reilly D.R."/>
        </authorList>
    </citation>
    <scope>NUCLEOTIDE SEQUENCE [GENOMIC DNA]</scope>
    <source>
        <strain>Mexican 1</strain>
    </source>
</reference>
<reference key="3">
    <citation type="journal article" date="2001" name="J. Gen. Virol.">
        <title>The complete sequence of the Cydia pomonella granulovirus genome.</title>
        <authorList>
            <person name="Luque T."/>
            <person name="Finch R."/>
            <person name="Crook N."/>
            <person name="O'Reilly D.R."/>
            <person name="Winstanley D."/>
        </authorList>
    </citation>
    <scope>NUCLEOTIDE SEQUENCE [GENOMIC DNA]</scope>
    <source>
        <strain>Mexican 1</strain>
    </source>
</reference>
<reference key="4">
    <citation type="journal article" date="2005" name="J. Biochem. Mol. Biol.">
        <title>Transcription, translation, and immunolocalization of ODVP-6E/ODV-E56 and p74 proteins: two highly conserved ODV-associated envelope proteins of Choristoneura fumiferana Granulovirus.</title>
        <authorList>
            <person name="Rashidan K.K."/>
            <person name="Nassoury N."/>
            <person name="Giannopoulos P.N."/>
            <person name="Guertin C."/>
        </authorList>
    </citation>
    <scope>SUBCELLULAR LOCATION</scope>
</reference>
<organism>
    <name type="scientific">Cydia pomonella granulosis virus (isolate Mexico/1963)</name>
    <name type="common">CpGV</name>
    <name type="synonym">Cydia pomonella granulovirus</name>
    <dbReference type="NCBI Taxonomy" id="654905"/>
    <lineage>
        <taxon>Viruses</taxon>
        <taxon>Viruses incertae sedis</taxon>
        <taxon>Naldaviricetes</taxon>
        <taxon>Lefavirales</taxon>
        <taxon>Baculoviridae</taxon>
        <taxon>Betabaculovirus</taxon>
        <taxon>Betabaculovirus cypomonellae</taxon>
    </lineage>
</organism>
<proteinExistence type="inferred from homology"/>
<sequence>MSFFRGLRRTNKVYNDPSGFITDHAQLIRNQTPAGFNLNNPTTMGLANGTYVPGYNINGAFISNTNVNTVLRNNDVVGMRQLFPDASNNQMNGLTNLRRADNIPDATLHGLQTRKNGVKTSHPETAVRDRVGVENALAQNPRLADYLRGAGYVTLFGVSVYLVINVADLVSSIVEALNRTGGSWYYRGNNGGDNFSNIDACVLRYRSCGMSLADIDEFVCELDPHDPNNVDPLLSFDEARNFCNGYSLAAEGSVCRGSDTNADPSTLQYLDISELEPNQTVQCVEPYDFGDLIGDLGLDWLLGENGFVTASSNSLTSVSNNFTTILLVIGGILLLTFIGFVIFKVVNRSSNNNTS</sequence>
<dbReference type="EMBL" id="U53466">
    <property type="protein sequence ID" value="AAB39099.1"/>
    <property type="molecule type" value="Genomic_DNA"/>
</dbReference>
<dbReference type="SMR" id="Q66209"/>
<dbReference type="GlyCosmos" id="Q66209">
    <property type="glycosylation" value="1 site, No reported glycans"/>
</dbReference>
<dbReference type="KEGG" id="vg:921349"/>
<dbReference type="Proteomes" id="UP000009249">
    <property type="component" value="Segment"/>
</dbReference>
<dbReference type="GO" id="GO:0016020">
    <property type="term" value="C:membrane"/>
    <property type="evidence" value="ECO:0007669"/>
    <property type="project" value="UniProtKB-KW"/>
</dbReference>
<dbReference type="GO" id="GO:0019031">
    <property type="term" value="C:viral envelope"/>
    <property type="evidence" value="ECO:0007669"/>
    <property type="project" value="UniProtKB-KW"/>
</dbReference>
<dbReference type="GO" id="GO:0055036">
    <property type="term" value="C:virion membrane"/>
    <property type="evidence" value="ECO:0007669"/>
    <property type="project" value="UniProtKB-SubCell"/>
</dbReference>
<dbReference type="InterPro" id="IPR006733">
    <property type="entry name" value="Baculo_ODV-E56"/>
</dbReference>
<dbReference type="Pfam" id="PF04639">
    <property type="entry name" value="Baculo_E56"/>
    <property type="match status" value="1"/>
</dbReference>
<organismHost>
    <name type="scientific">Cydia pomonella</name>
    <name type="common">Codling moth</name>
    <dbReference type="NCBI Taxonomy" id="82600"/>
</organismHost>
<feature type="chain" id="PRO_0000132928" description="Occlusion-derived virus envelope protein E56">
    <location>
        <begin position="1"/>
        <end position="355"/>
    </location>
</feature>
<feature type="transmembrane region" description="Helical" evidence="1">
    <location>
        <begin position="150"/>
        <end position="170"/>
    </location>
</feature>
<feature type="transmembrane region" description="Helical" evidence="1">
    <location>
        <begin position="322"/>
        <end position="342"/>
    </location>
</feature>
<feature type="glycosylation site" description="N-linked (GlcNAc...) asparagine; by host" evidence="1">
    <location>
        <position position="178"/>
    </location>
</feature>
<keyword id="KW-0325">Glycoprotein</keyword>
<keyword id="KW-0426">Late protein</keyword>
<keyword id="KW-0472">Membrane</keyword>
<keyword id="KW-1185">Reference proteome</keyword>
<keyword id="KW-0812">Transmembrane</keyword>
<keyword id="KW-1133">Transmembrane helix</keyword>
<keyword id="KW-0261">Viral envelope protein</keyword>
<keyword id="KW-0946">Virion</keyword>
<name>OE56_GVCPM</name>